<accession>Q8E307</accession>
<evidence type="ECO:0000255" key="1">
    <source>
        <dbReference type="HAMAP-Rule" id="MF_00735"/>
    </source>
</evidence>
<comment type="function">
    <text evidence="1">Methylates ribosomal protein L11.</text>
</comment>
<comment type="catalytic activity">
    <reaction evidence="1">
        <text>L-lysyl-[protein] + 3 S-adenosyl-L-methionine = N(6),N(6),N(6)-trimethyl-L-lysyl-[protein] + 3 S-adenosyl-L-homocysteine + 3 H(+)</text>
        <dbReference type="Rhea" id="RHEA:54192"/>
        <dbReference type="Rhea" id="RHEA-COMP:9752"/>
        <dbReference type="Rhea" id="RHEA-COMP:13826"/>
        <dbReference type="ChEBI" id="CHEBI:15378"/>
        <dbReference type="ChEBI" id="CHEBI:29969"/>
        <dbReference type="ChEBI" id="CHEBI:57856"/>
        <dbReference type="ChEBI" id="CHEBI:59789"/>
        <dbReference type="ChEBI" id="CHEBI:61961"/>
    </reaction>
</comment>
<comment type="subcellular location">
    <subcellularLocation>
        <location evidence="1">Cytoplasm</location>
    </subcellularLocation>
</comment>
<comment type="similarity">
    <text evidence="1">Belongs to the methyltransferase superfamily. PrmA family.</text>
</comment>
<name>PRMA_STRA3</name>
<keyword id="KW-0963">Cytoplasm</keyword>
<keyword id="KW-0489">Methyltransferase</keyword>
<keyword id="KW-0949">S-adenosyl-L-methionine</keyword>
<keyword id="KW-0808">Transferase</keyword>
<organism>
    <name type="scientific">Streptococcus agalactiae serotype III (strain NEM316)</name>
    <dbReference type="NCBI Taxonomy" id="211110"/>
    <lineage>
        <taxon>Bacteria</taxon>
        <taxon>Bacillati</taxon>
        <taxon>Bacillota</taxon>
        <taxon>Bacilli</taxon>
        <taxon>Lactobacillales</taxon>
        <taxon>Streptococcaceae</taxon>
        <taxon>Streptococcus</taxon>
    </lineage>
</organism>
<feature type="chain" id="PRO_0000192313" description="Ribosomal protein L11 methyltransferase">
    <location>
        <begin position="1"/>
        <end position="317"/>
    </location>
</feature>
<feature type="binding site" evidence="1">
    <location>
        <position position="158"/>
    </location>
    <ligand>
        <name>S-adenosyl-L-methionine</name>
        <dbReference type="ChEBI" id="CHEBI:59789"/>
    </ligand>
</feature>
<feature type="binding site" evidence="1">
    <location>
        <position position="179"/>
    </location>
    <ligand>
        <name>S-adenosyl-L-methionine</name>
        <dbReference type="ChEBI" id="CHEBI:59789"/>
    </ligand>
</feature>
<feature type="binding site" evidence="1">
    <location>
        <position position="201"/>
    </location>
    <ligand>
        <name>S-adenosyl-L-methionine</name>
        <dbReference type="ChEBI" id="CHEBI:59789"/>
    </ligand>
</feature>
<feature type="binding site" evidence="1">
    <location>
        <position position="244"/>
    </location>
    <ligand>
        <name>S-adenosyl-L-methionine</name>
        <dbReference type="ChEBI" id="CHEBI:59789"/>
    </ligand>
</feature>
<protein>
    <recommendedName>
        <fullName evidence="1">Ribosomal protein L11 methyltransferase</fullName>
        <shortName evidence="1">L11 Mtase</shortName>
        <ecNumber evidence="1">2.1.1.-</ecNumber>
    </recommendedName>
</protein>
<reference key="1">
    <citation type="journal article" date="2002" name="Mol. Microbiol.">
        <title>Genome sequence of Streptococcus agalactiae, a pathogen causing invasive neonatal disease.</title>
        <authorList>
            <person name="Glaser P."/>
            <person name="Rusniok C."/>
            <person name="Buchrieser C."/>
            <person name="Chevalier F."/>
            <person name="Frangeul L."/>
            <person name="Msadek T."/>
            <person name="Zouine M."/>
            <person name="Couve E."/>
            <person name="Lalioui L."/>
            <person name="Poyart C."/>
            <person name="Trieu-Cuot P."/>
            <person name="Kunst F."/>
        </authorList>
    </citation>
    <scope>NUCLEOTIDE SEQUENCE [LARGE SCALE GENOMIC DNA]</scope>
    <source>
        <strain>NEM316</strain>
    </source>
</reference>
<gene>
    <name evidence="1" type="primary">prmA</name>
    <name type="ordered locus">gbs1956</name>
</gene>
<sequence>MNTWNELTVHVNREAEEAVSNLLIETGSQGVAISDSADYLGQEDRFGELYPEVEQSDMIAITAYYPDTLDIEAVKADLADRLANFEGFGLATGSVNLDSQELVEEDWADNWKKYYEPARITHDLTIVPSWTDYEAKAGEKIIKMDPGMAFGTGTHPTTKMSLFALEQVLRGGETVIDVGTGSGVLSIASSLLGAKDIYAYDLDDVAVRVAQENIDMNPGTENIHVAAGDLLKGVQQEVDVIVANILADILIHLTDDAYRLVKDEGYLIMSGIISEKWDMVRESAEKAGFFLETHMVQGEWNACVFKKTDDISGVIGG</sequence>
<dbReference type="EC" id="2.1.1.-" evidence="1"/>
<dbReference type="EMBL" id="AL766855">
    <property type="protein sequence ID" value="CAD47615.1"/>
    <property type="molecule type" value="Genomic_DNA"/>
</dbReference>
<dbReference type="RefSeq" id="WP_001099294.1">
    <property type="nucleotide sequence ID" value="NC_004368.1"/>
</dbReference>
<dbReference type="SMR" id="Q8E307"/>
<dbReference type="KEGG" id="san:gbs1956"/>
<dbReference type="eggNOG" id="COG2264">
    <property type="taxonomic scope" value="Bacteria"/>
</dbReference>
<dbReference type="HOGENOM" id="CLU_049382_0_1_9"/>
<dbReference type="Proteomes" id="UP000000823">
    <property type="component" value="Chromosome"/>
</dbReference>
<dbReference type="GO" id="GO:0005737">
    <property type="term" value="C:cytoplasm"/>
    <property type="evidence" value="ECO:0007669"/>
    <property type="project" value="UniProtKB-SubCell"/>
</dbReference>
<dbReference type="GO" id="GO:0016279">
    <property type="term" value="F:protein-lysine N-methyltransferase activity"/>
    <property type="evidence" value="ECO:0007669"/>
    <property type="project" value="RHEA"/>
</dbReference>
<dbReference type="GO" id="GO:0032259">
    <property type="term" value="P:methylation"/>
    <property type="evidence" value="ECO:0007669"/>
    <property type="project" value="UniProtKB-KW"/>
</dbReference>
<dbReference type="CDD" id="cd02440">
    <property type="entry name" value="AdoMet_MTases"/>
    <property type="match status" value="1"/>
</dbReference>
<dbReference type="Gene3D" id="3.40.50.150">
    <property type="entry name" value="Vaccinia Virus protein VP39"/>
    <property type="match status" value="1"/>
</dbReference>
<dbReference type="HAMAP" id="MF_00735">
    <property type="entry name" value="Methyltr_PrmA"/>
    <property type="match status" value="1"/>
</dbReference>
<dbReference type="InterPro" id="IPR050078">
    <property type="entry name" value="Ribosomal_L11_MeTrfase_PrmA"/>
</dbReference>
<dbReference type="InterPro" id="IPR004498">
    <property type="entry name" value="Ribosomal_PrmA_MeTrfase"/>
</dbReference>
<dbReference type="InterPro" id="IPR029063">
    <property type="entry name" value="SAM-dependent_MTases_sf"/>
</dbReference>
<dbReference type="NCBIfam" id="TIGR00406">
    <property type="entry name" value="prmA"/>
    <property type="match status" value="1"/>
</dbReference>
<dbReference type="PANTHER" id="PTHR43648">
    <property type="entry name" value="ELECTRON TRANSFER FLAVOPROTEIN BETA SUBUNIT LYSINE METHYLTRANSFERASE"/>
    <property type="match status" value="1"/>
</dbReference>
<dbReference type="PANTHER" id="PTHR43648:SF1">
    <property type="entry name" value="ELECTRON TRANSFER FLAVOPROTEIN BETA SUBUNIT LYSINE METHYLTRANSFERASE"/>
    <property type="match status" value="1"/>
</dbReference>
<dbReference type="Pfam" id="PF06325">
    <property type="entry name" value="PrmA"/>
    <property type="match status" value="1"/>
</dbReference>
<dbReference type="PIRSF" id="PIRSF000401">
    <property type="entry name" value="RPL11_MTase"/>
    <property type="match status" value="1"/>
</dbReference>
<dbReference type="SUPFAM" id="SSF53335">
    <property type="entry name" value="S-adenosyl-L-methionine-dependent methyltransferases"/>
    <property type="match status" value="1"/>
</dbReference>
<proteinExistence type="inferred from homology"/>